<accession>P72366</accession>
<accession>Q091U2</accession>
<organism>
    <name type="scientific">Stigmatella aurantiaca (strain DW4/3-1)</name>
    <dbReference type="NCBI Taxonomy" id="378806"/>
    <lineage>
        <taxon>Bacteria</taxon>
        <taxon>Pseudomonadati</taxon>
        <taxon>Myxococcota</taxon>
        <taxon>Myxococcia</taxon>
        <taxon>Myxococcales</taxon>
        <taxon>Cystobacterineae</taxon>
        <taxon>Archangiaceae</taxon>
        <taxon>Stigmatella</taxon>
    </lineage>
</organism>
<sequence>MATGTVKWFNDAKGFGFITQDGGGEDVFCHHSAINMDGFRTLQEGQKVEFEVTRGPKGLQAQNVRSIP</sequence>
<reference key="1">
    <citation type="submission" date="1996-10" db="EMBL/GenBank/DDBJ databases">
        <authorList>
            <person name="Stamm I."/>
            <person name="Leclerque A."/>
            <person name="Plaga W."/>
        </authorList>
    </citation>
    <scope>NUCLEOTIDE SEQUENCE [GENOMIC DNA]</scope>
    <source>
        <strain>DW4/3-1</strain>
    </source>
</reference>
<reference key="2">
    <citation type="submission" date="2006-04" db="EMBL/GenBank/DDBJ databases">
        <authorList>
            <person name="Nierman W.C."/>
        </authorList>
    </citation>
    <scope>NUCLEOTIDE SEQUENCE [LARGE SCALE GENOMIC DNA]</scope>
    <source>
        <strain>DW4/3-1</strain>
    </source>
</reference>
<reference key="3">
    <citation type="journal article" date="2011" name="Mol. Biol. Evol.">
        <title>Comparative genomic analysis of fruiting body formation in Myxococcales.</title>
        <authorList>
            <person name="Huntley S."/>
            <person name="Hamann N."/>
            <person name="Wegener-Feldbruegge S."/>
            <person name="Treuner-Lange A."/>
            <person name="Kube M."/>
            <person name="Reinhardt R."/>
            <person name="Klages S."/>
            <person name="Mueller R."/>
            <person name="Ronning C.M."/>
            <person name="Nierman W.C."/>
            <person name="Sogaard-Andersen L."/>
        </authorList>
    </citation>
    <scope>NUCLEOTIDE SEQUENCE [LARGE SCALE GENOMIC DNA]</scope>
    <source>
        <strain>DW4/3-1</strain>
    </source>
</reference>
<gene>
    <name type="primary">cspA</name>
    <name type="synonym">cspD</name>
    <name type="ordered locus">STAUR_4120</name>
    <name type="ORF">STIAU_1944</name>
</gene>
<comment type="subcellular location">
    <subcellularLocation>
        <location evidence="1">Cytoplasm</location>
    </subcellularLocation>
</comment>
<dbReference type="EMBL" id="U70990">
    <property type="protein sequence ID" value="AAB16850.1"/>
    <property type="molecule type" value="Genomic_DNA"/>
</dbReference>
<dbReference type="EMBL" id="AAMD01000054">
    <property type="protein sequence ID" value="EAU66507.1"/>
    <property type="molecule type" value="Genomic_DNA"/>
</dbReference>
<dbReference type="EMBL" id="CP002271">
    <property type="protein sequence ID" value="ADO71904.1"/>
    <property type="molecule type" value="Genomic_DNA"/>
</dbReference>
<dbReference type="RefSeq" id="WP_002613974.1">
    <property type="nucleotide sequence ID" value="NC_014623.1"/>
</dbReference>
<dbReference type="SMR" id="P72366"/>
<dbReference type="STRING" id="378806.STAUR_4120"/>
<dbReference type="KEGG" id="sur:STAUR_4120"/>
<dbReference type="eggNOG" id="COG1278">
    <property type="taxonomic scope" value="Bacteria"/>
</dbReference>
<dbReference type="HOGENOM" id="CLU_117621_0_3_7"/>
<dbReference type="OrthoDB" id="9800919at2"/>
<dbReference type="Proteomes" id="UP000001351">
    <property type="component" value="Chromosome"/>
</dbReference>
<dbReference type="Proteomes" id="UP000032702">
    <property type="component" value="Unassembled WGS sequence"/>
</dbReference>
<dbReference type="GO" id="GO:0005737">
    <property type="term" value="C:cytoplasm"/>
    <property type="evidence" value="ECO:0007669"/>
    <property type="project" value="UniProtKB-SubCell"/>
</dbReference>
<dbReference type="GO" id="GO:0003677">
    <property type="term" value="F:DNA binding"/>
    <property type="evidence" value="ECO:0007669"/>
    <property type="project" value="UniProtKB-KW"/>
</dbReference>
<dbReference type="CDD" id="cd04458">
    <property type="entry name" value="CSP_CDS"/>
    <property type="match status" value="1"/>
</dbReference>
<dbReference type="FunFam" id="2.40.50.140:FF:000006">
    <property type="entry name" value="Cold shock protein CspC"/>
    <property type="match status" value="1"/>
</dbReference>
<dbReference type="Gene3D" id="6.20.370.130">
    <property type="match status" value="1"/>
</dbReference>
<dbReference type="Gene3D" id="2.40.50.140">
    <property type="entry name" value="Nucleic acid-binding proteins"/>
    <property type="match status" value="1"/>
</dbReference>
<dbReference type="InterPro" id="IPR012156">
    <property type="entry name" value="Cold_shock_CspA"/>
</dbReference>
<dbReference type="InterPro" id="IPR050181">
    <property type="entry name" value="Cold_shock_domain"/>
</dbReference>
<dbReference type="InterPro" id="IPR011129">
    <property type="entry name" value="CSD"/>
</dbReference>
<dbReference type="InterPro" id="IPR019844">
    <property type="entry name" value="CSD_CS"/>
</dbReference>
<dbReference type="InterPro" id="IPR002059">
    <property type="entry name" value="CSP_DNA-bd"/>
</dbReference>
<dbReference type="InterPro" id="IPR012340">
    <property type="entry name" value="NA-bd_OB-fold"/>
</dbReference>
<dbReference type="PANTHER" id="PTHR11544">
    <property type="entry name" value="COLD SHOCK DOMAIN CONTAINING PROTEINS"/>
    <property type="match status" value="1"/>
</dbReference>
<dbReference type="Pfam" id="PF00313">
    <property type="entry name" value="CSD"/>
    <property type="match status" value="1"/>
</dbReference>
<dbReference type="PIRSF" id="PIRSF002599">
    <property type="entry name" value="Cold_shock_A"/>
    <property type="match status" value="1"/>
</dbReference>
<dbReference type="PRINTS" id="PR00050">
    <property type="entry name" value="COLDSHOCK"/>
</dbReference>
<dbReference type="SMART" id="SM00357">
    <property type="entry name" value="CSP"/>
    <property type="match status" value="1"/>
</dbReference>
<dbReference type="SUPFAM" id="SSF50249">
    <property type="entry name" value="Nucleic acid-binding proteins"/>
    <property type="match status" value="1"/>
</dbReference>
<dbReference type="PROSITE" id="PS00352">
    <property type="entry name" value="CSD_1"/>
    <property type="match status" value="1"/>
</dbReference>
<dbReference type="PROSITE" id="PS51857">
    <property type="entry name" value="CSD_2"/>
    <property type="match status" value="1"/>
</dbReference>
<proteinExistence type="inferred from homology"/>
<feature type="chain" id="PRO_0000100329" description="Cold shock-like protein CspA">
    <location>
        <begin position="1"/>
        <end position="68"/>
    </location>
</feature>
<feature type="domain" description="CSD">
    <location>
        <begin position="4"/>
        <end position="64"/>
    </location>
</feature>
<keyword id="KW-0010">Activator</keyword>
<keyword id="KW-0963">Cytoplasm</keyword>
<keyword id="KW-0238">DNA-binding</keyword>
<keyword id="KW-0804">Transcription</keyword>
<keyword id="KW-0805">Transcription regulation</keyword>
<protein>
    <recommendedName>
        <fullName>Cold shock-like protein CspA</fullName>
    </recommendedName>
</protein>
<evidence type="ECO:0000250" key="1"/>
<name>CSPA_STIAD</name>